<gene>
    <name evidence="1" type="primary">mdoC</name>
    <name evidence="1" type="synonym">opgC</name>
    <name type="ordered locus">EcSMS35_2084</name>
</gene>
<keyword id="KW-0012">Acyltransferase</keyword>
<keyword id="KW-1003">Cell membrane</keyword>
<keyword id="KW-0472">Membrane</keyword>
<keyword id="KW-0808">Transferase</keyword>
<keyword id="KW-0812">Transmembrane</keyword>
<keyword id="KW-1133">Transmembrane helix</keyword>
<name>OPGC_ECOSM</name>
<proteinExistence type="inferred from homology"/>
<dbReference type="EC" id="2.1.-.-" evidence="1"/>
<dbReference type="EMBL" id="CP000970">
    <property type="protein sequence ID" value="ACB20105.1"/>
    <property type="molecule type" value="Genomic_DNA"/>
</dbReference>
<dbReference type="RefSeq" id="WP_001070365.1">
    <property type="nucleotide sequence ID" value="NC_010498.1"/>
</dbReference>
<dbReference type="KEGG" id="ecm:EcSMS35_2084"/>
<dbReference type="HOGENOM" id="CLU_036182_2_0_6"/>
<dbReference type="UniPathway" id="UPA00637"/>
<dbReference type="Proteomes" id="UP000007011">
    <property type="component" value="Chromosome"/>
</dbReference>
<dbReference type="GO" id="GO:0005886">
    <property type="term" value="C:plasma membrane"/>
    <property type="evidence" value="ECO:0007669"/>
    <property type="project" value="UniProtKB-SubCell"/>
</dbReference>
<dbReference type="GO" id="GO:0016747">
    <property type="term" value="F:acyltransferase activity, transferring groups other than amino-acyl groups"/>
    <property type="evidence" value="ECO:0007669"/>
    <property type="project" value="InterPro"/>
</dbReference>
<dbReference type="GO" id="GO:0016741">
    <property type="term" value="F:transferase activity, transferring one-carbon groups"/>
    <property type="evidence" value="ECO:0007669"/>
    <property type="project" value="UniProtKB-UniRule"/>
</dbReference>
<dbReference type="GO" id="GO:0009250">
    <property type="term" value="P:glucan biosynthetic process"/>
    <property type="evidence" value="ECO:0007669"/>
    <property type="project" value="UniProtKB-UniRule"/>
</dbReference>
<dbReference type="HAMAP" id="MF_01066">
    <property type="entry name" value="MdoC_OpgC"/>
    <property type="match status" value="1"/>
</dbReference>
<dbReference type="InterPro" id="IPR002656">
    <property type="entry name" value="Acyl_transf_3_dom"/>
</dbReference>
<dbReference type="InterPro" id="IPR050623">
    <property type="entry name" value="Glucan_succinyl_AcylTrfase"/>
</dbReference>
<dbReference type="InterPro" id="IPR023723">
    <property type="entry name" value="Glucans_biosynth_C"/>
</dbReference>
<dbReference type="NCBIfam" id="NF003014">
    <property type="entry name" value="PRK03854.1"/>
    <property type="match status" value="1"/>
</dbReference>
<dbReference type="PANTHER" id="PTHR36927">
    <property type="entry name" value="BLR4337 PROTEIN"/>
    <property type="match status" value="1"/>
</dbReference>
<dbReference type="PANTHER" id="PTHR36927:SF3">
    <property type="entry name" value="GLUCANS BIOSYNTHESIS PROTEIN C"/>
    <property type="match status" value="1"/>
</dbReference>
<dbReference type="Pfam" id="PF01757">
    <property type="entry name" value="Acyl_transf_3"/>
    <property type="match status" value="1"/>
</dbReference>
<sequence length="385" mass="44699">MNPVPAQREYFLDSIRAWLMLLGIPFHISLIYSSHTWHVNSAEPSLWLTLFNDFIHSFRMQVFFVISGYFSYMLFLRYPLKKWWKVRVKRVGIPMLTAIPLLTLPQFIMLQYVKGKAESWPGLSLYDKYNTLAWELISHLWFLLVLVVMTTLCVWIFKRIRNNLENSDKTNKKFSMVKLSVIFLCLGIGYAVIRRTIFIVYPPILSNGMFNFIVMQTLFYLPFFILGALAFIFPHLKALFTTPSRGCTLAAALAFVAYLLNQRYGSGDAWMYETESVITMVLGLWMVNVVFSFGHRLLNFQSARVTYFVNASLFIYLVHHPLTLFFGAYITPHITSNWLGFLCGLIFVVGIAIILYEIHLRIPLLKFLFSGKPVVKRENDKAPAR</sequence>
<feature type="chain" id="PRO_1000136569" description="Glucans biosynthesis protein C">
    <location>
        <begin position="1"/>
        <end position="385"/>
    </location>
</feature>
<feature type="transmembrane region" description="Helical" evidence="1">
    <location>
        <begin position="17"/>
        <end position="37"/>
    </location>
</feature>
<feature type="transmembrane region" description="Helical" evidence="1">
    <location>
        <begin position="60"/>
        <end position="80"/>
    </location>
</feature>
<feature type="transmembrane region" description="Helical" evidence="1">
    <location>
        <begin position="91"/>
        <end position="111"/>
    </location>
</feature>
<feature type="transmembrane region" description="Helical" evidence="1">
    <location>
        <begin position="137"/>
        <end position="157"/>
    </location>
</feature>
<feature type="transmembrane region" description="Helical" evidence="1">
    <location>
        <begin position="173"/>
        <end position="193"/>
    </location>
</feature>
<feature type="transmembrane region" description="Helical" evidence="1">
    <location>
        <begin position="212"/>
        <end position="232"/>
    </location>
</feature>
<feature type="transmembrane region" description="Helical" evidence="1">
    <location>
        <begin position="239"/>
        <end position="259"/>
    </location>
</feature>
<feature type="transmembrane region" description="Helical" evidence="1">
    <location>
        <begin position="274"/>
        <end position="294"/>
    </location>
</feature>
<feature type="transmembrane region" description="Helical" evidence="1">
    <location>
        <begin position="311"/>
        <end position="331"/>
    </location>
</feature>
<feature type="transmembrane region" description="Helical" evidence="1">
    <location>
        <begin position="338"/>
        <end position="358"/>
    </location>
</feature>
<protein>
    <recommendedName>
        <fullName evidence="1">Glucans biosynthesis protein C</fullName>
        <ecNumber evidence="1">2.1.-.-</ecNumber>
    </recommendedName>
</protein>
<reference key="1">
    <citation type="journal article" date="2008" name="J. Bacteriol.">
        <title>Insights into the environmental resistance gene pool from the genome sequence of the multidrug-resistant environmental isolate Escherichia coli SMS-3-5.</title>
        <authorList>
            <person name="Fricke W.F."/>
            <person name="Wright M.S."/>
            <person name="Lindell A.H."/>
            <person name="Harkins D.M."/>
            <person name="Baker-Austin C."/>
            <person name="Ravel J."/>
            <person name="Stepanauskas R."/>
        </authorList>
    </citation>
    <scope>NUCLEOTIDE SEQUENCE [LARGE SCALE GENOMIC DNA]</scope>
    <source>
        <strain>SMS-3-5 / SECEC</strain>
    </source>
</reference>
<organism>
    <name type="scientific">Escherichia coli (strain SMS-3-5 / SECEC)</name>
    <dbReference type="NCBI Taxonomy" id="439855"/>
    <lineage>
        <taxon>Bacteria</taxon>
        <taxon>Pseudomonadati</taxon>
        <taxon>Pseudomonadota</taxon>
        <taxon>Gammaproteobacteria</taxon>
        <taxon>Enterobacterales</taxon>
        <taxon>Enterobacteriaceae</taxon>
        <taxon>Escherichia</taxon>
    </lineage>
</organism>
<accession>B1LIW5</accession>
<comment type="function">
    <text evidence="1">Necessary for the succinyl substitution of periplasmic glucans. Could catalyze the transfer of succinyl residues from the cytoplasmic side of the membrane to the nascent glucan backbones on the periplasmic side of the membrane.</text>
</comment>
<comment type="pathway">
    <text evidence="1">Glycan metabolism; osmoregulated periplasmic glucan (OPG) biosynthesis.</text>
</comment>
<comment type="subcellular location">
    <subcellularLocation>
        <location evidence="1">Cell membrane</location>
        <topology evidence="1">Multi-pass membrane protein</topology>
    </subcellularLocation>
</comment>
<comment type="similarity">
    <text evidence="1">Belongs to the acyltransferase 3 family. OpgC subfamily.</text>
</comment>
<evidence type="ECO:0000255" key="1">
    <source>
        <dbReference type="HAMAP-Rule" id="MF_01066"/>
    </source>
</evidence>